<name>CENPP_CHICK</name>
<protein>
    <recommendedName>
        <fullName>Centromere protein P</fullName>
        <shortName>CENP-P</shortName>
    </recommendedName>
</protein>
<feature type="chain" id="PRO_0000249508" description="Centromere protein P">
    <location>
        <begin position="1"/>
        <end position="287"/>
    </location>
</feature>
<feature type="coiled-coil region" evidence="2">
    <location>
        <begin position="1"/>
        <end position="37"/>
    </location>
</feature>
<organism>
    <name type="scientific">Gallus gallus</name>
    <name type="common">Chicken</name>
    <dbReference type="NCBI Taxonomy" id="9031"/>
    <lineage>
        <taxon>Eukaryota</taxon>
        <taxon>Metazoa</taxon>
        <taxon>Chordata</taxon>
        <taxon>Craniata</taxon>
        <taxon>Vertebrata</taxon>
        <taxon>Euteleostomi</taxon>
        <taxon>Archelosauria</taxon>
        <taxon>Archosauria</taxon>
        <taxon>Dinosauria</taxon>
        <taxon>Saurischia</taxon>
        <taxon>Theropoda</taxon>
        <taxon>Coelurosauria</taxon>
        <taxon>Aves</taxon>
        <taxon>Neognathae</taxon>
        <taxon>Galloanserae</taxon>
        <taxon>Galliformes</taxon>
        <taxon>Phasianidae</taxon>
        <taxon>Phasianinae</taxon>
        <taxon>Gallus</taxon>
    </lineage>
</organism>
<reference key="1">
    <citation type="journal article" date="2006" name="Nat. Cell Biol.">
        <title>The CENP-H-I complex is required for the efficient incorporation of newly synthesized CENP-A into centromeres.</title>
        <authorList>
            <person name="Okada M."/>
            <person name="Cheeseman I.M."/>
            <person name="Hori T."/>
            <person name="Okawa K."/>
            <person name="McLeod I.X."/>
            <person name="Yates J.R. III"/>
            <person name="Desai A."/>
            <person name="Fukagawa T."/>
        </authorList>
    </citation>
    <scope>NUCLEOTIDE SEQUENCE [MRNA]</scope>
    <scope>IDENTIFICATION BY MASS SPECTROMETRY</scope>
    <scope>IDENTIFICATION IN A COMPLEX WITH CENPH; CENPI; CENPK; CENPL; CENPM AND CENPO</scope>
</reference>
<sequence>MDNSVYQVYEDEIQLLEEEIKLLSDKYEDIQQESTFFSDEEVLMSVKLFQREFLEEHKGHGPPLDLKAELESLQRDLSFLVKFTGIQITSHSKKTLEKTGNRTVQKHRLSGNCQSLPFSLEFQLLEVQNKENVSAAITDLSIAIESGQHSELSKFVSRAEENGNLLMFFRNLSSYAEWCEHRRCTFLHFKAKYPNIVTLPEGQEGDHIILRNPQLPGFELMIVWKMHIDEEGTTTPVLDLLPKVPQQALEQKKASIDNAPACFRSMLLLFGIETAIENLIQVVGLEK</sequence>
<proteinExistence type="evidence at protein level"/>
<keyword id="KW-0137">Centromere</keyword>
<keyword id="KW-0158">Chromosome</keyword>
<keyword id="KW-0175">Coiled coil</keyword>
<keyword id="KW-0539">Nucleus</keyword>
<keyword id="KW-1185">Reference proteome</keyword>
<accession>Q1T7B7</accession>
<comment type="function">
    <text evidence="1">Component of the CENPA-HI complex, a centromeric complex involved in assembly of kinetochore proteins, mitotic progression and chromosome segregation.</text>
</comment>
<comment type="subunit">
    <text evidence="3">Component of the CENPA-HI complex, at least composed of CENPH, CENPI, CENPK, CENPL, CENPM, CENPO and CENPP.</text>
</comment>
<comment type="subcellular location">
    <subcellularLocation>
        <location evidence="4">Nucleus</location>
    </subcellularLocation>
    <subcellularLocation>
        <location evidence="4">Chromosome</location>
        <location evidence="4">Centromere</location>
    </subcellularLocation>
    <text evidence="4">Localizes exclusively in the centromeres.</text>
</comment>
<comment type="similarity">
    <text evidence="4">Belongs to the CENP-P/CTF19 family.</text>
</comment>
<evidence type="ECO:0000250" key="1"/>
<evidence type="ECO:0000255" key="2"/>
<evidence type="ECO:0000269" key="3">
    <source>
    </source>
</evidence>
<evidence type="ECO:0000305" key="4"/>
<gene>
    <name type="primary">CENPP</name>
</gene>
<dbReference type="EMBL" id="AB231851">
    <property type="protein sequence ID" value="BAE93416.1"/>
    <property type="molecule type" value="mRNA"/>
</dbReference>
<dbReference type="RefSeq" id="NP_001038100.1">
    <property type="nucleotide sequence ID" value="NM_001044635.1"/>
</dbReference>
<dbReference type="SMR" id="Q1T7B7"/>
<dbReference type="BioGRID" id="677524">
    <property type="interactions" value="2"/>
</dbReference>
<dbReference type="FunCoup" id="Q1T7B7">
    <property type="interactions" value="401"/>
</dbReference>
<dbReference type="STRING" id="9031.ENSGALP00000007455"/>
<dbReference type="PaxDb" id="9031-ENSGALP00000007455"/>
<dbReference type="GeneID" id="415952"/>
<dbReference type="KEGG" id="gga:415952"/>
<dbReference type="CTD" id="401541"/>
<dbReference type="VEuPathDB" id="HostDB:geneid_415952"/>
<dbReference type="eggNOG" id="ENOG502S17P">
    <property type="taxonomic scope" value="Eukaryota"/>
</dbReference>
<dbReference type="InParanoid" id="Q1T7B7"/>
<dbReference type="OrthoDB" id="5976950at2759"/>
<dbReference type="PhylomeDB" id="Q1T7B7"/>
<dbReference type="PRO" id="PR:Q1T7B7"/>
<dbReference type="Proteomes" id="UP000000539">
    <property type="component" value="Unassembled WGS sequence"/>
</dbReference>
<dbReference type="GO" id="GO:0000775">
    <property type="term" value="C:chromosome, centromeric region"/>
    <property type="evidence" value="ECO:0007669"/>
    <property type="project" value="UniProtKB-SubCell"/>
</dbReference>
<dbReference type="GO" id="GO:0005634">
    <property type="term" value="C:nucleus"/>
    <property type="evidence" value="ECO:0000318"/>
    <property type="project" value="GO_Central"/>
</dbReference>
<dbReference type="GO" id="GO:0034080">
    <property type="term" value="P:CENP-A containing chromatin assembly"/>
    <property type="evidence" value="ECO:0007669"/>
    <property type="project" value="InterPro"/>
</dbReference>
<dbReference type="InterPro" id="IPR027801">
    <property type="entry name" value="CENP-P"/>
</dbReference>
<dbReference type="PANTHER" id="PTHR28577">
    <property type="entry name" value="CENTROMERE PROTEIN P"/>
    <property type="match status" value="1"/>
</dbReference>
<dbReference type="PANTHER" id="PTHR28577:SF1">
    <property type="entry name" value="CENTROMERE PROTEIN P"/>
    <property type="match status" value="1"/>
</dbReference>
<dbReference type="Pfam" id="PF13096">
    <property type="entry name" value="CENP-P"/>
    <property type="match status" value="1"/>
</dbReference>